<dbReference type="EMBL" id="AE006469">
    <property type="protein sequence ID" value="AAK64723.1"/>
    <property type="molecule type" value="Genomic_DNA"/>
</dbReference>
<dbReference type="PIR" id="A95270">
    <property type="entry name" value="A95270"/>
</dbReference>
<dbReference type="RefSeq" id="NP_435311.1">
    <property type="nucleotide sequence ID" value="NC_003037.1"/>
</dbReference>
<dbReference type="RefSeq" id="WP_010967066.1">
    <property type="nucleotide sequence ID" value="NC_003037.1"/>
</dbReference>
<dbReference type="SMR" id="Q930X9"/>
<dbReference type="EnsemblBacteria" id="AAK64723">
    <property type="protein sequence ID" value="AAK64723"/>
    <property type="gene ID" value="SMa0125"/>
</dbReference>
<dbReference type="KEGG" id="sme:SMa0125"/>
<dbReference type="PATRIC" id="fig|266834.11.peg.68"/>
<dbReference type="HOGENOM" id="CLU_132825_1_0_5"/>
<dbReference type="OrthoDB" id="9806791at2"/>
<dbReference type="Proteomes" id="UP000001976">
    <property type="component" value="Plasmid pSymA"/>
</dbReference>
<dbReference type="GO" id="GO:0005737">
    <property type="term" value="C:cytoplasm"/>
    <property type="evidence" value="ECO:0007669"/>
    <property type="project" value="UniProtKB-SubCell"/>
</dbReference>
<dbReference type="GO" id="GO:0005524">
    <property type="term" value="F:ATP binding"/>
    <property type="evidence" value="ECO:0007669"/>
    <property type="project" value="InterPro"/>
</dbReference>
<dbReference type="GO" id="GO:0046872">
    <property type="term" value="F:metal ion binding"/>
    <property type="evidence" value="ECO:0007669"/>
    <property type="project" value="TreeGrafter"/>
</dbReference>
<dbReference type="GO" id="GO:0044183">
    <property type="term" value="F:protein folding chaperone"/>
    <property type="evidence" value="ECO:0007669"/>
    <property type="project" value="InterPro"/>
</dbReference>
<dbReference type="GO" id="GO:0051087">
    <property type="term" value="F:protein-folding chaperone binding"/>
    <property type="evidence" value="ECO:0007669"/>
    <property type="project" value="TreeGrafter"/>
</dbReference>
<dbReference type="GO" id="GO:0051082">
    <property type="term" value="F:unfolded protein binding"/>
    <property type="evidence" value="ECO:0007669"/>
    <property type="project" value="TreeGrafter"/>
</dbReference>
<dbReference type="GO" id="GO:0051085">
    <property type="term" value="P:chaperone cofactor-dependent protein refolding"/>
    <property type="evidence" value="ECO:0007669"/>
    <property type="project" value="TreeGrafter"/>
</dbReference>
<dbReference type="CDD" id="cd00320">
    <property type="entry name" value="cpn10"/>
    <property type="match status" value="1"/>
</dbReference>
<dbReference type="FunFam" id="2.30.33.40:FF:000001">
    <property type="entry name" value="10 kDa chaperonin"/>
    <property type="match status" value="1"/>
</dbReference>
<dbReference type="Gene3D" id="2.30.33.40">
    <property type="entry name" value="GroES chaperonin"/>
    <property type="match status" value="1"/>
</dbReference>
<dbReference type="HAMAP" id="MF_00580">
    <property type="entry name" value="CH10"/>
    <property type="match status" value="1"/>
</dbReference>
<dbReference type="InterPro" id="IPR020818">
    <property type="entry name" value="Chaperonin_GroES"/>
</dbReference>
<dbReference type="InterPro" id="IPR037124">
    <property type="entry name" value="Chaperonin_GroES_sf"/>
</dbReference>
<dbReference type="InterPro" id="IPR018369">
    <property type="entry name" value="Chaprnonin_Cpn10_CS"/>
</dbReference>
<dbReference type="InterPro" id="IPR011032">
    <property type="entry name" value="GroES-like_sf"/>
</dbReference>
<dbReference type="NCBIfam" id="NF001527">
    <property type="entry name" value="PRK00364.1-2"/>
    <property type="match status" value="1"/>
</dbReference>
<dbReference type="NCBIfam" id="NF001529">
    <property type="entry name" value="PRK00364.1-5"/>
    <property type="match status" value="1"/>
</dbReference>
<dbReference type="NCBIfam" id="NF001531">
    <property type="entry name" value="PRK00364.2-2"/>
    <property type="match status" value="1"/>
</dbReference>
<dbReference type="NCBIfam" id="NF001533">
    <property type="entry name" value="PRK00364.2-4"/>
    <property type="match status" value="1"/>
</dbReference>
<dbReference type="PANTHER" id="PTHR10772">
    <property type="entry name" value="10 KDA HEAT SHOCK PROTEIN"/>
    <property type="match status" value="1"/>
</dbReference>
<dbReference type="PANTHER" id="PTHR10772:SF58">
    <property type="entry name" value="CO-CHAPERONIN GROES"/>
    <property type="match status" value="1"/>
</dbReference>
<dbReference type="Pfam" id="PF00166">
    <property type="entry name" value="Cpn10"/>
    <property type="match status" value="1"/>
</dbReference>
<dbReference type="PRINTS" id="PR00297">
    <property type="entry name" value="CHAPERONIN10"/>
</dbReference>
<dbReference type="SMART" id="SM00883">
    <property type="entry name" value="Cpn10"/>
    <property type="match status" value="1"/>
</dbReference>
<dbReference type="SUPFAM" id="SSF50129">
    <property type="entry name" value="GroES-like"/>
    <property type="match status" value="1"/>
</dbReference>
<dbReference type="PROSITE" id="PS00681">
    <property type="entry name" value="CHAPERONINS_CPN10"/>
    <property type="match status" value="1"/>
</dbReference>
<comment type="function">
    <text evidence="1">Together with the chaperonin GroEL, plays an essential role in assisting protein folding. The GroEL-GroES system forms a nano-cage that allows encapsulation of the non-native substrate proteins and provides a physical environment optimized to promote and accelerate protein folding. GroES binds to the apical surface of the GroEL ring, thereby capping the opening of the GroEL channel.</text>
</comment>
<comment type="subunit">
    <text evidence="1">Heptamer of 7 subunits arranged in a ring. Interacts with the chaperonin GroEL.</text>
</comment>
<comment type="subcellular location">
    <subcellularLocation>
        <location evidence="1">Cytoplasm</location>
    </subcellularLocation>
</comment>
<comment type="similarity">
    <text evidence="1 2">Belongs to the GroES chaperonin family.</text>
</comment>
<protein>
    <recommendedName>
        <fullName evidence="1">Co-chaperonin GroES 3</fullName>
    </recommendedName>
    <alternativeName>
        <fullName evidence="1">10 kDa chaperonin 3</fullName>
    </alternativeName>
    <alternativeName>
        <fullName evidence="1">Chaperonin-10 3</fullName>
        <shortName evidence="1">Cpn10 3</shortName>
    </alternativeName>
</protein>
<feature type="chain" id="PRO_0000174818" description="Co-chaperonin GroES 3">
    <location>
        <begin position="1"/>
        <end position="105"/>
    </location>
</feature>
<geneLocation type="plasmid">
    <name>pSymA</name>
    <name>megaplasmid 1</name>
</geneLocation>
<gene>
    <name evidence="1" type="primary">groES3</name>
    <name evidence="1" type="synonym">groS3</name>
    <name type="ordered locus">RA0065</name>
    <name type="ORF">SMa0125</name>
</gene>
<name>CH103_RHIME</name>
<keyword id="KW-0143">Chaperone</keyword>
<keyword id="KW-0963">Cytoplasm</keyword>
<keyword id="KW-0614">Plasmid</keyword>
<keyword id="KW-1185">Reference proteome</keyword>
<keyword id="KW-0346">Stress response</keyword>
<organism>
    <name type="scientific">Rhizobium meliloti (strain 1021)</name>
    <name type="common">Ensifer meliloti</name>
    <name type="synonym">Sinorhizobium meliloti</name>
    <dbReference type="NCBI Taxonomy" id="266834"/>
    <lineage>
        <taxon>Bacteria</taxon>
        <taxon>Pseudomonadati</taxon>
        <taxon>Pseudomonadota</taxon>
        <taxon>Alphaproteobacteria</taxon>
        <taxon>Hyphomicrobiales</taxon>
        <taxon>Rhizobiaceae</taxon>
        <taxon>Sinorhizobium/Ensifer group</taxon>
        <taxon>Sinorhizobium</taxon>
    </lineage>
</organism>
<reference key="1">
    <citation type="journal article" date="2001" name="Proc. Natl. Acad. Sci. U.S.A.">
        <title>Nucleotide sequence and predicted functions of the entire Sinorhizobium meliloti pSymA megaplasmid.</title>
        <authorList>
            <person name="Barnett M.J."/>
            <person name="Fisher R.F."/>
            <person name="Jones T."/>
            <person name="Komp C."/>
            <person name="Abola A.P."/>
            <person name="Barloy-Hubler F."/>
            <person name="Bowser L."/>
            <person name="Capela D."/>
            <person name="Galibert F."/>
            <person name="Gouzy J."/>
            <person name="Gurjal M."/>
            <person name="Hong A."/>
            <person name="Huizar L."/>
            <person name="Hyman R.W."/>
            <person name="Kahn D."/>
            <person name="Kahn M.L."/>
            <person name="Kalman S."/>
            <person name="Keating D.H."/>
            <person name="Palm C."/>
            <person name="Peck M.C."/>
            <person name="Surzycki R."/>
            <person name="Wells D.H."/>
            <person name="Yeh K.-C."/>
            <person name="Davis R.W."/>
            <person name="Federspiel N.A."/>
            <person name="Long S.R."/>
        </authorList>
    </citation>
    <scope>NUCLEOTIDE SEQUENCE [LARGE SCALE GENOMIC DNA]</scope>
    <source>
        <strain>1021</strain>
    </source>
</reference>
<reference key="2">
    <citation type="journal article" date="2001" name="Science">
        <title>The composite genome of the legume symbiont Sinorhizobium meliloti.</title>
        <authorList>
            <person name="Galibert F."/>
            <person name="Finan T.M."/>
            <person name="Long S.R."/>
            <person name="Puehler A."/>
            <person name="Abola P."/>
            <person name="Ampe F."/>
            <person name="Barloy-Hubler F."/>
            <person name="Barnett M.J."/>
            <person name="Becker A."/>
            <person name="Boistard P."/>
            <person name="Bothe G."/>
            <person name="Boutry M."/>
            <person name="Bowser L."/>
            <person name="Buhrmester J."/>
            <person name="Cadieu E."/>
            <person name="Capela D."/>
            <person name="Chain P."/>
            <person name="Cowie A."/>
            <person name="Davis R.W."/>
            <person name="Dreano S."/>
            <person name="Federspiel N.A."/>
            <person name="Fisher R.F."/>
            <person name="Gloux S."/>
            <person name="Godrie T."/>
            <person name="Goffeau A."/>
            <person name="Golding B."/>
            <person name="Gouzy J."/>
            <person name="Gurjal M."/>
            <person name="Hernandez-Lucas I."/>
            <person name="Hong A."/>
            <person name="Huizar L."/>
            <person name="Hyman R.W."/>
            <person name="Jones T."/>
            <person name="Kahn D."/>
            <person name="Kahn M.L."/>
            <person name="Kalman S."/>
            <person name="Keating D.H."/>
            <person name="Kiss E."/>
            <person name="Komp C."/>
            <person name="Lelaure V."/>
            <person name="Masuy D."/>
            <person name="Palm C."/>
            <person name="Peck M.C."/>
            <person name="Pohl T.M."/>
            <person name="Portetelle D."/>
            <person name="Purnelle B."/>
            <person name="Ramsperger U."/>
            <person name="Surzycki R."/>
            <person name="Thebault P."/>
            <person name="Vandenbol M."/>
            <person name="Vorhoelter F.J."/>
            <person name="Weidner S."/>
            <person name="Wells D.H."/>
            <person name="Wong K."/>
            <person name="Yeh K.-C."/>
            <person name="Batut J."/>
        </authorList>
    </citation>
    <scope>NUCLEOTIDE SEQUENCE [LARGE SCALE GENOMIC DNA]</scope>
    <source>
        <strain>1021</strain>
    </source>
</reference>
<evidence type="ECO:0000255" key="1">
    <source>
        <dbReference type="HAMAP-Rule" id="MF_00580"/>
    </source>
</evidence>
<evidence type="ECO:0000305" key="2"/>
<sequence>MTFRPLLDRVVIRRAEGNTQSKGGIIIPDTAKEKPQEGEVIAVGPGSRDESGKLIPLDVKIGDTILFGKWSGTEVKIDGEDLLIMKESDIMGIVANTVPTAANAA</sequence>
<proteinExistence type="inferred from homology"/>
<accession>Q930X9</accession>